<comment type="function">
    <text evidence="1">Aspartyl-tRNA synthetase with relaxed tRNA specificity since it is able to aspartylate not only its cognate tRNA(Asp) but also tRNA(Asn). Reaction proceeds in two steps: L-aspartate is first activated by ATP to form Asp-AMP and then transferred to the acceptor end of tRNA(Asp/Asn).</text>
</comment>
<comment type="catalytic activity">
    <reaction evidence="1">
        <text>tRNA(Asx) + L-aspartate + ATP = L-aspartyl-tRNA(Asx) + AMP + diphosphate</text>
        <dbReference type="Rhea" id="RHEA:18349"/>
        <dbReference type="Rhea" id="RHEA-COMP:9710"/>
        <dbReference type="Rhea" id="RHEA-COMP:9711"/>
        <dbReference type="ChEBI" id="CHEBI:29991"/>
        <dbReference type="ChEBI" id="CHEBI:30616"/>
        <dbReference type="ChEBI" id="CHEBI:33019"/>
        <dbReference type="ChEBI" id="CHEBI:78442"/>
        <dbReference type="ChEBI" id="CHEBI:78516"/>
        <dbReference type="ChEBI" id="CHEBI:456215"/>
        <dbReference type="EC" id="6.1.1.23"/>
    </reaction>
</comment>
<comment type="subunit">
    <text evidence="1">Homodimer.</text>
</comment>
<comment type="subcellular location">
    <subcellularLocation>
        <location evidence="1">Cytoplasm</location>
    </subcellularLocation>
</comment>
<comment type="similarity">
    <text evidence="1">Belongs to the class-II aminoacyl-tRNA synthetase family. Type 1 subfamily.</text>
</comment>
<accession>Q1GYN8</accession>
<dbReference type="EC" id="6.1.1.23" evidence="1"/>
<dbReference type="EMBL" id="CP000284">
    <property type="protein sequence ID" value="ABE50649.1"/>
    <property type="molecule type" value="Genomic_DNA"/>
</dbReference>
<dbReference type="RefSeq" id="WP_011480602.1">
    <property type="nucleotide sequence ID" value="NC_007947.1"/>
</dbReference>
<dbReference type="SMR" id="Q1GYN8"/>
<dbReference type="STRING" id="265072.Mfla_2384"/>
<dbReference type="KEGG" id="mfa:Mfla_2384"/>
<dbReference type="eggNOG" id="COG0173">
    <property type="taxonomic scope" value="Bacteria"/>
</dbReference>
<dbReference type="HOGENOM" id="CLU_014330_3_2_4"/>
<dbReference type="OrthoDB" id="9802326at2"/>
<dbReference type="Proteomes" id="UP000002440">
    <property type="component" value="Chromosome"/>
</dbReference>
<dbReference type="GO" id="GO:0005737">
    <property type="term" value="C:cytoplasm"/>
    <property type="evidence" value="ECO:0007669"/>
    <property type="project" value="UniProtKB-SubCell"/>
</dbReference>
<dbReference type="GO" id="GO:0004815">
    <property type="term" value="F:aspartate-tRNA ligase activity"/>
    <property type="evidence" value="ECO:0007669"/>
    <property type="project" value="UniProtKB-UniRule"/>
</dbReference>
<dbReference type="GO" id="GO:0050560">
    <property type="term" value="F:aspartate-tRNA(Asn) ligase activity"/>
    <property type="evidence" value="ECO:0007669"/>
    <property type="project" value="UniProtKB-EC"/>
</dbReference>
<dbReference type="GO" id="GO:0005524">
    <property type="term" value="F:ATP binding"/>
    <property type="evidence" value="ECO:0007669"/>
    <property type="project" value="UniProtKB-UniRule"/>
</dbReference>
<dbReference type="GO" id="GO:0003676">
    <property type="term" value="F:nucleic acid binding"/>
    <property type="evidence" value="ECO:0007669"/>
    <property type="project" value="InterPro"/>
</dbReference>
<dbReference type="GO" id="GO:0006422">
    <property type="term" value="P:aspartyl-tRNA aminoacylation"/>
    <property type="evidence" value="ECO:0007669"/>
    <property type="project" value="UniProtKB-UniRule"/>
</dbReference>
<dbReference type="CDD" id="cd00777">
    <property type="entry name" value="AspRS_core"/>
    <property type="match status" value="1"/>
</dbReference>
<dbReference type="CDD" id="cd04317">
    <property type="entry name" value="EcAspRS_like_N"/>
    <property type="match status" value="1"/>
</dbReference>
<dbReference type="Gene3D" id="3.30.930.10">
    <property type="entry name" value="Bira Bifunctional Protein, Domain 2"/>
    <property type="match status" value="1"/>
</dbReference>
<dbReference type="Gene3D" id="3.30.1360.30">
    <property type="entry name" value="GAD-like domain"/>
    <property type="match status" value="1"/>
</dbReference>
<dbReference type="Gene3D" id="2.40.50.140">
    <property type="entry name" value="Nucleic acid-binding proteins"/>
    <property type="match status" value="1"/>
</dbReference>
<dbReference type="HAMAP" id="MF_00044">
    <property type="entry name" value="Asp_tRNA_synth_type1"/>
    <property type="match status" value="1"/>
</dbReference>
<dbReference type="InterPro" id="IPR004364">
    <property type="entry name" value="Aa-tRNA-synt_II"/>
</dbReference>
<dbReference type="InterPro" id="IPR006195">
    <property type="entry name" value="aa-tRNA-synth_II"/>
</dbReference>
<dbReference type="InterPro" id="IPR045864">
    <property type="entry name" value="aa-tRNA-synth_II/BPL/LPL"/>
</dbReference>
<dbReference type="InterPro" id="IPR004524">
    <property type="entry name" value="Asp-tRNA-ligase_1"/>
</dbReference>
<dbReference type="InterPro" id="IPR047089">
    <property type="entry name" value="Asp-tRNA-ligase_1_N"/>
</dbReference>
<dbReference type="InterPro" id="IPR002312">
    <property type="entry name" value="Asp/Asn-tRNA-synth_IIb"/>
</dbReference>
<dbReference type="InterPro" id="IPR047090">
    <property type="entry name" value="AspRS_core"/>
</dbReference>
<dbReference type="InterPro" id="IPR004115">
    <property type="entry name" value="GAD-like_sf"/>
</dbReference>
<dbReference type="InterPro" id="IPR029351">
    <property type="entry name" value="GAD_dom"/>
</dbReference>
<dbReference type="InterPro" id="IPR012340">
    <property type="entry name" value="NA-bd_OB-fold"/>
</dbReference>
<dbReference type="InterPro" id="IPR004365">
    <property type="entry name" value="NA-bd_OB_tRNA"/>
</dbReference>
<dbReference type="NCBIfam" id="TIGR00459">
    <property type="entry name" value="aspS_bact"/>
    <property type="match status" value="1"/>
</dbReference>
<dbReference type="NCBIfam" id="NF001750">
    <property type="entry name" value="PRK00476.1"/>
    <property type="match status" value="1"/>
</dbReference>
<dbReference type="PANTHER" id="PTHR22594:SF5">
    <property type="entry name" value="ASPARTATE--TRNA LIGASE, MITOCHONDRIAL"/>
    <property type="match status" value="1"/>
</dbReference>
<dbReference type="PANTHER" id="PTHR22594">
    <property type="entry name" value="ASPARTYL/LYSYL-TRNA SYNTHETASE"/>
    <property type="match status" value="1"/>
</dbReference>
<dbReference type="Pfam" id="PF02938">
    <property type="entry name" value="GAD"/>
    <property type="match status" value="1"/>
</dbReference>
<dbReference type="Pfam" id="PF00152">
    <property type="entry name" value="tRNA-synt_2"/>
    <property type="match status" value="1"/>
</dbReference>
<dbReference type="Pfam" id="PF01336">
    <property type="entry name" value="tRNA_anti-codon"/>
    <property type="match status" value="1"/>
</dbReference>
<dbReference type="PRINTS" id="PR01042">
    <property type="entry name" value="TRNASYNTHASP"/>
</dbReference>
<dbReference type="SUPFAM" id="SSF55681">
    <property type="entry name" value="Class II aaRS and biotin synthetases"/>
    <property type="match status" value="1"/>
</dbReference>
<dbReference type="SUPFAM" id="SSF55261">
    <property type="entry name" value="GAD domain-like"/>
    <property type="match status" value="1"/>
</dbReference>
<dbReference type="SUPFAM" id="SSF50249">
    <property type="entry name" value="Nucleic acid-binding proteins"/>
    <property type="match status" value="1"/>
</dbReference>
<dbReference type="PROSITE" id="PS50862">
    <property type="entry name" value="AA_TRNA_LIGASE_II"/>
    <property type="match status" value="1"/>
</dbReference>
<sequence>MRTHYCGHLNREHIGQTVTLCGWAHRRRDHGGVIFIDLRDREGMAQIVIDPDTPEAFKIAESVRNEFVLKVVCKVRARPEGTVNLNIPTGEVEMLASEIEILNPSLTPPFMLDDDNLSEMVRLEHRYIDLRRPAMQKNLMLRYRVAKVLRDQLDSQGFIEVETPMLTRSTPEGARDYLVPSRVHHGQFFALPQSPQLFKQLLMVSGFDRYFQITKCFRDEDLRADRQPEFTQVDIETSFLNEEEIMTIVEGMIRTMFKQVQDIDLPNPFPRISFAEAMNRYGSDKPDMRVTLEITELTDVMKDVDFKVFAGAANSAGGRVAAIRVPNGAALSRSEIDAYTEFVKIYGAKGLAYIKVNDASKLNEEGLQSPIVKNIHEPALKAIIERTGAQSGDIVFFGADKAKIVNEALGALRTKIGHEKGHVDGRAWAPLWVVDFPMFEHDEENDRWVALHHPFTSPKDGHEDLLASNPGAALSKAYDMVLNGWEVGGGSVRIHKQEVQSKVFDALKISKEEAQEKFGFLLDALQYGAPPHGGLAFGLDRLVTLMAGAESIRDVIAFPKTQRAQCLMTKAPNEVDEKQLRELHIRVRQQNPAA</sequence>
<evidence type="ECO:0000255" key="1">
    <source>
        <dbReference type="HAMAP-Rule" id="MF_00044"/>
    </source>
</evidence>
<keyword id="KW-0030">Aminoacyl-tRNA synthetase</keyword>
<keyword id="KW-0067">ATP-binding</keyword>
<keyword id="KW-0963">Cytoplasm</keyword>
<keyword id="KW-0436">Ligase</keyword>
<keyword id="KW-0547">Nucleotide-binding</keyword>
<keyword id="KW-0648">Protein biosynthesis</keyword>
<keyword id="KW-1185">Reference proteome</keyword>
<name>SYDND_METFK</name>
<gene>
    <name evidence="1" type="primary">aspS</name>
    <name type="ordered locus">Mfla_2384</name>
</gene>
<reference key="1">
    <citation type="submission" date="2006-03" db="EMBL/GenBank/DDBJ databases">
        <title>Complete sequence of Methylobacillus flagellatus KT.</title>
        <authorList>
            <consortium name="US DOE Joint Genome Institute"/>
            <person name="Copeland A."/>
            <person name="Lucas S."/>
            <person name="Lapidus A."/>
            <person name="Barry K."/>
            <person name="Detter J.C."/>
            <person name="Glavina del Rio T."/>
            <person name="Hammon N."/>
            <person name="Israni S."/>
            <person name="Dalin E."/>
            <person name="Tice H."/>
            <person name="Pitluck S."/>
            <person name="Brettin T."/>
            <person name="Bruce D."/>
            <person name="Han C."/>
            <person name="Tapia R."/>
            <person name="Saunders E."/>
            <person name="Gilna P."/>
            <person name="Schmutz J."/>
            <person name="Larimer F."/>
            <person name="Land M."/>
            <person name="Kyrpides N."/>
            <person name="Anderson I."/>
            <person name="Richardson P."/>
        </authorList>
    </citation>
    <scope>NUCLEOTIDE SEQUENCE [LARGE SCALE GENOMIC DNA]</scope>
    <source>
        <strain>ATCC 51484 / DSM 6875 / VKM B-1610 / KT</strain>
    </source>
</reference>
<feature type="chain" id="PRO_1000006703" description="Aspartate--tRNA(Asp/Asn) ligase">
    <location>
        <begin position="1"/>
        <end position="594"/>
    </location>
</feature>
<feature type="region of interest" description="Aspartate" evidence="1">
    <location>
        <begin position="196"/>
        <end position="199"/>
    </location>
</feature>
<feature type="binding site" evidence="1">
    <location>
        <position position="172"/>
    </location>
    <ligand>
        <name>L-aspartate</name>
        <dbReference type="ChEBI" id="CHEBI:29991"/>
    </ligand>
</feature>
<feature type="binding site" evidence="1">
    <location>
        <begin position="218"/>
        <end position="220"/>
    </location>
    <ligand>
        <name>ATP</name>
        <dbReference type="ChEBI" id="CHEBI:30616"/>
    </ligand>
</feature>
<feature type="binding site" evidence="1">
    <location>
        <position position="218"/>
    </location>
    <ligand>
        <name>L-aspartate</name>
        <dbReference type="ChEBI" id="CHEBI:29991"/>
    </ligand>
</feature>
<feature type="binding site" evidence="1">
    <location>
        <position position="227"/>
    </location>
    <ligand>
        <name>ATP</name>
        <dbReference type="ChEBI" id="CHEBI:30616"/>
    </ligand>
</feature>
<feature type="binding site" evidence="1">
    <location>
        <position position="452"/>
    </location>
    <ligand>
        <name>L-aspartate</name>
        <dbReference type="ChEBI" id="CHEBI:29991"/>
    </ligand>
</feature>
<feature type="binding site" evidence="1">
    <location>
        <position position="486"/>
    </location>
    <ligand>
        <name>ATP</name>
        <dbReference type="ChEBI" id="CHEBI:30616"/>
    </ligand>
</feature>
<feature type="binding site" evidence="1">
    <location>
        <position position="493"/>
    </location>
    <ligand>
        <name>L-aspartate</name>
        <dbReference type="ChEBI" id="CHEBI:29991"/>
    </ligand>
</feature>
<feature type="binding site" evidence="1">
    <location>
        <begin position="538"/>
        <end position="541"/>
    </location>
    <ligand>
        <name>ATP</name>
        <dbReference type="ChEBI" id="CHEBI:30616"/>
    </ligand>
</feature>
<feature type="site" description="Important for tRNA non-discrimination" evidence="1">
    <location>
        <position position="30"/>
    </location>
</feature>
<feature type="site" description="Important for tRNA non-discrimination" evidence="1">
    <location>
        <position position="81"/>
    </location>
</feature>
<proteinExistence type="inferred from homology"/>
<organism>
    <name type="scientific">Methylobacillus flagellatus (strain ATCC 51484 / DSM 6875 / VKM B-1610 / KT)</name>
    <dbReference type="NCBI Taxonomy" id="265072"/>
    <lineage>
        <taxon>Bacteria</taxon>
        <taxon>Pseudomonadati</taxon>
        <taxon>Pseudomonadota</taxon>
        <taxon>Betaproteobacteria</taxon>
        <taxon>Nitrosomonadales</taxon>
        <taxon>Methylophilaceae</taxon>
        <taxon>Methylobacillus</taxon>
    </lineage>
</organism>
<protein>
    <recommendedName>
        <fullName evidence="1">Aspartate--tRNA(Asp/Asn) ligase</fullName>
        <ecNumber evidence="1">6.1.1.23</ecNumber>
    </recommendedName>
    <alternativeName>
        <fullName evidence="1">Aspartyl-tRNA synthetase</fullName>
        <shortName evidence="1">AspRS</shortName>
    </alternativeName>
    <alternativeName>
        <fullName evidence="1">Non-discriminating aspartyl-tRNA synthetase</fullName>
        <shortName evidence="1">ND-AspRS</shortName>
    </alternativeName>
</protein>